<proteinExistence type="inferred from homology"/>
<comment type="function">
    <text evidence="1">Activator of cell division through the inhibition of FtsZ GTPase activity, therefore promoting FtsZ assembly into bundles of protofilaments necessary for the formation of the division Z ring. It is recruited early at mid-cell but it is not essential for cell division.</text>
</comment>
<comment type="subunit">
    <text evidence="1">Homodimer. Interacts with FtsZ.</text>
</comment>
<comment type="subcellular location">
    <subcellularLocation>
        <location evidence="1">Cytoplasm</location>
    </subcellularLocation>
    <text evidence="1">Localizes at mid-cell.</text>
</comment>
<comment type="similarity">
    <text evidence="1">Belongs to the ZapA family. Type 1 subfamily.</text>
</comment>
<gene>
    <name evidence="1" type="primary">zapA</name>
    <name type="ordered locus">Spro_3921</name>
</gene>
<accession>A8GIS6</accession>
<dbReference type="EMBL" id="CP000826">
    <property type="protein sequence ID" value="ABV43016.1"/>
    <property type="molecule type" value="Genomic_DNA"/>
</dbReference>
<dbReference type="SMR" id="A8GIS6"/>
<dbReference type="STRING" id="399741.Spro_3921"/>
<dbReference type="KEGG" id="spe:Spro_3921"/>
<dbReference type="eggNOG" id="COG3027">
    <property type="taxonomic scope" value="Bacteria"/>
</dbReference>
<dbReference type="HOGENOM" id="CLU_116623_3_0_6"/>
<dbReference type="OrthoDB" id="5917174at2"/>
<dbReference type="GO" id="GO:0032153">
    <property type="term" value="C:cell division site"/>
    <property type="evidence" value="ECO:0007669"/>
    <property type="project" value="TreeGrafter"/>
</dbReference>
<dbReference type="GO" id="GO:0030428">
    <property type="term" value="C:cell septum"/>
    <property type="evidence" value="ECO:0007669"/>
    <property type="project" value="TreeGrafter"/>
</dbReference>
<dbReference type="GO" id="GO:0005829">
    <property type="term" value="C:cytosol"/>
    <property type="evidence" value="ECO:0007669"/>
    <property type="project" value="TreeGrafter"/>
</dbReference>
<dbReference type="GO" id="GO:0005886">
    <property type="term" value="C:plasma membrane"/>
    <property type="evidence" value="ECO:0007669"/>
    <property type="project" value="UniProtKB-UniRule"/>
</dbReference>
<dbReference type="GO" id="GO:0000917">
    <property type="term" value="P:division septum assembly"/>
    <property type="evidence" value="ECO:0007669"/>
    <property type="project" value="UniProtKB-KW"/>
</dbReference>
<dbReference type="GO" id="GO:0043093">
    <property type="term" value="P:FtsZ-dependent cytokinesis"/>
    <property type="evidence" value="ECO:0007669"/>
    <property type="project" value="TreeGrafter"/>
</dbReference>
<dbReference type="GO" id="GO:0000921">
    <property type="term" value="P:septin ring assembly"/>
    <property type="evidence" value="ECO:0007669"/>
    <property type="project" value="TreeGrafter"/>
</dbReference>
<dbReference type="FunFam" id="1.20.5.50:FF:000001">
    <property type="entry name" value="Cell division protein ZapA"/>
    <property type="match status" value="1"/>
</dbReference>
<dbReference type="FunFam" id="3.30.160.880:FF:000001">
    <property type="entry name" value="Cell division protein ZapA"/>
    <property type="match status" value="1"/>
</dbReference>
<dbReference type="Gene3D" id="1.20.5.50">
    <property type="match status" value="1"/>
</dbReference>
<dbReference type="Gene3D" id="3.30.160.880">
    <property type="entry name" value="Cell division protein ZapA protomer, N-terminal domain"/>
    <property type="match status" value="1"/>
</dbReference>
<dbReference type="HAMAP" id="MF_02012">
    <property type="entry name" value="ZapA_type1"/>
    <property type="match status" value="1"/>
</dbReference>
<dbReference type="InterPro" id="IPR007838">
    <property type="entry name" value="Cell_div_ZapA-like"/>
</dbReference>
<dbReference type="InterPro" id="IPR036192">
    <property type="entry name" value="Cell_div_ZapA-like_sf"/>
</dbReference>
<dbReference type="InterPro" id="IPR023771">
    <property type="entry name" value="Cell_div_ZapA_eubact"/>
</dbReference>
<dbReference type="InterPro" id="IPR042233">
    <property type="entry name" value="Cell_div_ZapA_N"/>
</dbReference>
<dbReference type="NCBIfam" id="NF008209">
    <property type="entry name" value="PRK10972.1"/>
    <property type="match status" value="1"/>
</dbReference>
<dbReference type="PANTHER" id="PTHR34981">
    <property type="entry name" value="CELL DIVISION PROTEIN ZAPA"/>
    <property type="match status" value="1"/>
</dbReference>
<dbReference type="PANTHER" id="PTHR34981:SF1">
    <property type="entry name" value="CELL DIVISION PROTEIN ZAPA"/>
    <property type="match status" value="1"/>
</dbReference>
<dbReference type="Pfam" id="PF05164">
    <property type="entry name" value="ZapA"/>
    <property type="match status" value="1"/>
</dbReference>
<dbReference type="SUPFAM" id="SSF102829">
    <property type="entry name" value="Cell division protein ZapA-like"/>
    <property type="match status" value="1"/>
</dbReference>
<organism>
    <name type="scientific">Serratia proteamaculans (strain 568)</name>
    <dbReference type="NCBI Taxonomy" id="399741"/>
    <lineage>
        <taxon>Bacteria</taxon>
        <taxon>Pseudomonadati</taxon>
        <taxon>Pseudomonadota</taxon>
        <taxon>Gammaproteobacteria</taxon>
        <taxon>Enterobacterales</taxon>
        <taxon>Yersiniaceae</taxon>
        <taxon>Serratia</taxon>
    </lineage>
</organism>
<name>ZAPA_SERP5</name>
<feature type="chain" id="PRO_0000345659" description="Cell division protein ZapA">
    <location>
        <begin position="1"/>
        <end position="109"/>
    </location>
</feature>
<feature type="coiled-coil region" evidence="1">
    <location>
        <begin position="71"/>
        <end position="99"/>
    </location>
</feature>
<keyword id="KW-0131">Cell cycle</keyword>
<keyword id="KW-0132">Cell division</keyword>
<keyword id="KW-0175">Coiled coil</keyword>
<keyword id="KW-0963">Cytoplasm</keyword>
<keyword id="KW-0717">Septation</keyword>
<sequence>MSAQPVDIQIFGRSLRVNCPPEQQDALNMAAVDLNERLQDLKVRTRVTNTEQLVFIAALNVCHELAQERLKTRDYASNMEQRIRMLQQTIEQALLEQGRISERQDAQFE</sequence>
<reference key="1">
    <citation type="submission" date="2007-09" db="EMBL/GenBank/DDBJ databases">
        <title>Complete sequence of chromosome of Serratia proteamaculans 568.</title>
        <authorList>
            <consortium name="US DOE Joint Genome Institute"/>
            <person name="Copeland A."/>
            <person name="Lucas S."/>
            <person name="Lapidus A."/>
            <person name="Barry K."/>
            <person name="Glavina del Rio T."/>
            <person name="Dalin E."/>
            <person name="Tice H."/>
            <person name="Pitluck S."/>
            <person name="Chain P."/>
            <person name="Malfatti S."/>
            <person name="Shin M."/>
            <person name="Vergez L."/>
            <person name="Schmutz J."/>
            <person name="Larimer F."/>
            <person name="Land M."/>
            <person name="Hauser L."/>
            <person name="Kyrpides N."/>
            <person name="Kim E."/>
            <person name="Taghavi S."/>
            <person name="Newman L."/>
            <person name="Vangronsveld J."/>
            <person name="van der Lelie D."/>
            <person name="Richardson P."/>
        </authorList>
    </citation>
    <scope>NUCLEOTIDE SEQUENCE [LARGE SCALE GENOMIC DNA]</scope>
    <source>
        <strain>568</strain>
    </source>
</reference>
<protein>
    <recommendedName>
        <fullName evidence="1">Cell division protein ZapA</fullName>
    </recommendedName>
    <alternativeName>
        <fullName evidence="1">Z ring-associated protein ZapA</fullName>
    </alternativeName>
</protein>
<evidence type="ECO:0000255" key="1">
    <source>
        <dbReference type="HAMAP-Rule" id="MF_02012"/>
    </source>
</evidence>